<dbReference type="EC" id="3.6.-.-" evidence="1"/>
<dbReference type="EMBL" id="CP000671">
    <property type="protein sequence ID" value="ABQ98722.1"/>
    <property type="molecule type" value="Genomic_DNA"/>
</dbReference>
<dbReference type="SMR" id="A5UD71"/>
<dbReference type="KEGG" id="hip:CGSHiEE_06965"/>
<dbReference type="HOGENOM" id="CLU_019624_4_1_6"/>
<dbReference type="GO" id="GO:0005829">
    <property type="term" value="C:cytosol"/>
    <property type="evidence" value="ECO:0007669"/>
    <property type="project" value="TreeGrafter"/>
</dbReference>
<dbReference type="GO" id="GO:0005525">
    <property type="term" value="F:GTP binding"/>
    <property type="evidence" value="ECO:0007669"/>
    <property type="project" value="UniProtKB-UniRule"/>
</dbReference>
<dbReference type="GO" id="GO:0003924">
    <property type="term" value="F:GTPase activity"/>
    <property type="evidence" value="ECO:0007669"/>
    <property type="project" value="UniProtKB-UniRule"/>
</dbReference>
<dbReference type="GO" id="GO:0046872">
    <property type="term" value="F:metal ion binding"/>
    <property type="evidence" value="ECO:0007669"/>
    <property type="project" value="UniProtKB-KW"/>
</dbReference>
<dbReference type="GO" id="GO:0030488">
    <property type="term" value="P:tRNA methylation"/>
    <property type="evidence" value="ECO:0007669"/>
    <property type="project" value="TreeGrafter"/>
</dbReference>
<dbReference type="GO" id="GO:0002098">
    <property type="term" value="P:tRNA wobble uridine modification"/>
    <property type="evidence" value="ECO:0007669"/>
    <property type="project" value="TreeGrafter"/>
</dbReference>
<dbReference type="CDD" id="cd04164">
    <property type="entry name" value="trmE"/>
    <property type="match status" value="1"/>
</dbReference>
<dbReference type="CDD" id="cd14858">
    <property type="entry name" value="TrmE_N"/>
    <property type="match status" value="1"/>
</dbReference>
<dbReference type="FunFam" id="3.30.1360.120:FF:000001">
    <property type="entry name" value="tRNA modification GTPase MnmE"/>
    <property type="match status" value="1"/>
</dbReference>
<dbReference type="FunFam" id="3.40.50.300:FF:000249">
    <property type="entry name" value="tRNA modification GTPase MnmE"/>
    <property type="match status" value="1"/>
</dbReference>
<dbReference type="Gene3D" id="3.40.50.300">
    <property type="entry name" value="P-loop containing nucleotide triphosphate hydrolases"/>
    <property type="match status" value="1"/>
</dbReference>
<dbReference type="Gene3D" id="3.30.1360.120">
    <property type="entry name" value="Probable tRNA modification gtpase trme, domain 1"/>
    <property type="match status" value="1"/>
</dbReference>
<dbReference type="Gene3D" id="1.20.120.430">
    <property type="entry name" value="tRNA modification GTPase MnmE domain 2"/>
    <property type="match status" value="1"/>
</dbReference>
<dbReference type="HAMAP" id="MF_00379">
    <property type="entry name" value="GTPase_MnmE"/>
    <property type="match status" value="1"/>
</dbReference>
<dbReference type="InterPro" id="IPR031168">
    <property type="entry name" value="G_TrmE"/>
</dbReference>
<dbReference type="InterPro" id="IPR006073">
    <property type="entry name" value="GTP-bd"/>
</dbReference>
<dbReference type="InterPro" id="IPR018948">
    <property type="entry name" value="GTP-bd_TrmE_N"/>
</dbReference>
<dbReference type="InterPro" id="IPR004520">
    <property type="entry name" value="GTPase_MnmE"/>
</dbReference>
<dbReference type="InterPro" id="IPR027368">
    <property type="entry name" value="MnmE_dom2"/>
</dbReference>
<dbReference type="InterPro" id="IPR025867">
    <property type="entry name" value="MnmE_helical"/>
</dbReference>
<dbReference type="InterPro" id="IPR027417">
    <property type="entry name" value="P-loop_NTPase"/>
</dbReference>
<dbReference type="InterPro" id="IPR005225">
    <property type="entry name" value="Small_GTP-bd"/>
</dbReference>
<dbReference type="InterPro" id="IPR027266">
    <property type="entry name" value="TrmE/GcvT_dom1"/>
</dbReference>
<dbReference type="NCBIfam" id="TIGR00450">
    <property type="entry name" value="mnmE_trmE_thdF"/>
    <property type="match status" value="1"/>
</dbReference>
<dbReference type="NCBIfam" id="NF003661">
    <property type="entry name" value="PRK05291.1-3"/>
    <property type="match status" value="1"/>
</dbReference>
<dbReference type="NCBIfam" id="TIGR00231">
    <property type="entry name" value="small_GTP"/>
    <property type="match status" value="1"/>
</dbReference>
<dbReference type="PANTHER" id="PTHR42714">
    <property type="entry name" value="TRNA MODIFICATION GTPASE GTPBP3"/>
    <property type="match status" value="1"/>
</dbReference>
<dbReference type="PANTHER" id="PTHR42714:SF2">
    <property type="entry name" value="TRNA MODIFICATION GTPASE GTPBP3, MITOCHONDRIAL"/>
    <property type="match status" value="1"/>
</dbReference>
<dbReference type="Pfam" id="PF01926">
    <property type="entry name" value="MMR_HSR1"/>
    <property type="match status" value="1"/>
</dbReference>
<dbReference type="Pfam" id="PF12631">
    <property type="entry name" value="MnmE_helical"/>
    <property type="match status" value="1"/>
</dbReference>
<dbReference type="Pfam" id="PF10396">
    <property type="entry name" value="TrmE_N"/>
    <property type="match status" value="1"/>
</dbReference>
<dbReference type="SUPFAM" id="SSF52540">
    <property type="entry name" value="P-loop containing nucleoside triphosphate hydrolases"/>
    <property type="match status" value="1"/>
</dbReference>
<dbReference type="SUPFAM" id="SSF116878">
    <property type="entry name" value="TrmE connector domain"/>
    <property type="match status" value="1"/>
</dbReference>
<dbReference type="PROSITE" id="PS51709">
    <property type="entry name" value="G_TRME"/>
    <property type="match status" value="1"/>
</dbReference>
<reference key="1">
    <citation type="journal article" date="2007" name="Genome Biol.">
        <title>Characterization and modeling of the Haemophilus influenzae core and supragenomes based on the complete genomic sequences of Rd and 12 clinical nontypeable strains.</title>
        <authorList>
            <person name="Hogg J.S."/>
            <person name="Hu F.Z."/>
            <person name="Janto B."/>
            <person name="Boissy R."/>
            <person name="Hayes J."/>
            <person name="Keefe R."/>
            <person name="Post J.C."/>
            <person name="Ehrlich G.D."/>
        </authorList>
    </citation>
    <scope>NUCLEOTIDE SEQUENCE [LARGE SCALE GENOMIC DNA]</scope>
    <source>
        <strain>PittEE</strain>
    </source>
</reference>
<name>MNME_HAEIE</name>
<evidence type="ECO:0000255" key="1">
    <source>
        <dbReference type="HAMAP-Rule" id="MF_00379"/>
    </source>
</evidence>
<comment type="function">
    <text evidence="1">Exhibits a very high intrinsic GTPase hydrolysis rate. Involved in the addition of a carboxymethylaminomethyl (cmnm) group at the wobble position (U34) of certain tRNAs, forming tRNA-cmnm(5)s(2)U34.</text>
</comment>
<comment type="cofactor">
    <cofactor evidence="1">
        <name>K(+)</name>
        <dbReference type="ChEBI" id="CHEBI:29103"/>
    </cofactor>
    <text evidence="1">Binds 1 potassium ion per subunit.</text>
</comment>
<comment type="subunit">
    <text evidence="1">Homodimer. Heterotetramer of two MnmE and two MnmG subunits.</text>
</comment>
<comment type="subcellular location">
    <subcellularLocation>
        <location evidence="1">Cytoplasm</location>
    </subcellularLocation>
</comment>
<comment type="similarity">
    <text evidence="1">Belongs to the TRAFAC class TrmE-Era-EngA-EngB-Septin-like GTPase superfamily. TrmE GTPase family.</text>
</comment>
<protein>
    <recommendedName>
        <fullName evidence="1">tRNA modification GTPase MnmE</fullName>
        <ecNumber evidence="1">3.6.-.-</ecNumber>
    </recommendedName>
</protein>
<feature type="chain" id="PRO_1000048831" description="tRNA modification GTPase MnmE">
    <location>
        <begin position="1"/>
        <end position="452"/>
    </location>
</feature>
<feature type="domain" description="TrmE-type G">
    <location>
        <begin position="214"/>
        <end position="375"/>
    </location>
</feature>
<feature type="binding site" evidence="1">
    <location>
        <position position="21"/>
    </location>
    <ligand>
        <name>(6S)-5-formyl-5,6,7,8-tetrahydrofolate</name>
        <dbReference type="ChEBI" id="CHEBI:57457"/>
    </ligand>
</feature>
<feature type="binding site" evidence="1">
    <location>
        <position position="78"/>
    </location>
    <ligand>
        <name>(6S)-5-formyl-5,6,7,8-tetrahydrofolate</name>
        <dbReference type="ChEBI" id="CHEBI:57457"/>
    </ligand>
</feature>
<feature type="binding site" evidence="1">
    <location>
        <position position="118"/>
    </location>
    <ligand>
        <name>(6S)-5-formyl-5,6,7,8-tetrahydrofolate</name>
        <dbReference type="ChEBI" id="CHEBI:57457"/>
    </ligand>
</feature>
<feature type="binding site" evidence="1">
    <location>
        <begin position="224"/>
        <end position="229"/>
    </location>
    <ligand>
        <name>GTP</name>
        <dbReference type="ChEBI" id="CHEBI:37565"/>
    </ligand>
</feature>
<feature type="binding site" evidence="1">
    <location>
        <position position="224"/>
    </location>
    <ligand>
        <name>K(+)</name>
        <dbReference type="ChEBI" id="CHEBI:29103"/>
    </ligand>
</feature>
<feature type="binding site" evidence="1">
    <location>
        <position position="228"/>
    </location>
    <ligand>
        <name>Mg(2+)</name>
        <dbReference type="ChEBI" id="CHEBI:18420"/>
    </ligand>
</feature>
<feature type="binding site" evidence="1">
    <location>
        <begin position="243"/>
        <end position="249"/>
    </location>
    <ligand>
        <name>GTP</name>
        <dbReference type="ChEBI" id="CHEBI:37565"/>
    </ligand>
</feature>
<feature type="binding site" evidence="1">
    <location>
        <position position="243"/>
    </location>
    <ligand>
        <name>K(+)</name>
        <dbReference type="ChEBI" id="CHEBI:29103"/>
    </ligand>
</feature>
<feature type="binding site" evidence="1">
    <location>
        <position position="245"/>
    </location>
    <ligand>
        <name>K(+)</name>
        <dbReference type="ChEBI" id="CHEBI:29103"/>
    </ligand>
</feature>
<feature type="binding site" evidence="1">
    <location>
        <position position="248"/>
    </location>
    <ligand>
        <name>K(+)</name>
        <dbReference type="ChEBI" id="CHEBI:29103"/>
    </ligand>
</feature>
<feature type="binding site" evidence="1">
    <location>
        <position position="249"/>
    </location>
    <ligand>
        <name>Mg(2+)</name>
        <dbReference type="ChEBI" id="CHEBI:18420"/>
    </ligand>
</feature>
<feature type="binding site" evidence="1">
    <location>
        <begin position="268"/>
        <end position="271"/>
    </location>
    <ligand>
        <name>GTP</name>
        <dbReference type="ChEBI" id="CHEBI:37565"/>
    </ligand>
</feature>
<feature type="binding site" evidence="1">
    <location>
        <position position="452"/>
    </location>
    <ligand>
        <name>(6S)-5-formyl-5,6,7,8-tetrahydrofolate</name>
        <dbReference type="ChEBI" id="CHEBI:57457"/>
    </ligand>
</feature>
<accession>A5UD71</accession>
<proteinExistence type="inferred from homology"/>
<sequence length="452" mass="49171">MKETIVAQATAPGRGGIGILRVSGPLATEVAQAILGKCPKPRMADYLPFKDADGTILDQGIALYFKSPNSFTGEDVLELQGHGGQVVLDLLLKRILQIDGIRLARPGEFSEQAFLNDKLDLAQAEAIADLIDATSEQAARSALKSLQGEFSKKVNELVDSVIYLRTYVEASIDFPDEEIDFLADGKIEANLRGIINQLENVRSEAKQGSILREGMKVVIAGRPNAGKSSLLNALAGREAAIVTDIAGTTRDVLREHIHIDGMPLHIIDTAGLRDATDEVERIGISRAWTEIEQADRIILMLDSSDPESADLSKVRSEFLAKLPSTLPVTIVRNKIDLNGEQASESEEGGYQIISLSAQTHDGVKLLREHLKQAMGFQTGIEGGFLARRRHLDALEKAAEHLQIGLVQLTEFHAGELLAEELRLVQSYLSEITGQFTSDDLLGNIFSSFCIGK</sequence>
<gene>
    <name evidence="1" type="primary">mnmE</name>
    <name evidence="1" type="synonym">trmE</name>
    <name type="ordered locus">CGSHiEE_06965</name>
</gene>
<keyword id="KW-0963">Cytoplasm</keyword>
<keyword id="KW-0342">GTP-binding</keyword>
<keyword id="KW-0378">Hydrolase</keyword>
<keyword id="KW-0460">Magnesium</keyword>
<keyword id="KW-0479">Metal-binding</keyword>
<keyword id="KW-0547">Nucleotide-binding</keyword>
<keyword id="KW-0630">Potassium</keyword>
<keyword id="KW-0819">tRNA processing</keyword>
<organism>
    <name type="scientific">Haemophilus influenzae (strain PittEE)</name>
    <dbReference type="NCBI Taxonomy" id="374930"/>
    <lineage>
        <taxon>Bacteria</taxon>
        <taxon>Pseudomonadati</taxon>
        <taxon>Pseudomonadota</taxon>
        <taxon>Gammaproteobacteria</taxon>
        <taxon>Pasteurellales</taxon>
        <taxon>Pasteurellaceae</taxon>
        <taxon>Haemophilus</taxon>
    </lineage>
</organism>